<keyword id="KW-0378">Hydrolase</keyword>
<keyword id="KW-0460">Magnesium</keyword>
<keyword id="KW-0479">Metal-binding</keyword>
<keyword id="KW-0540">Nuclease</keyword>
<keyword id="KW-1185">Reference proteome</keyword>
<keyword id="KW-1277">Toxin-antitoxin system</keyword>
<accession>P67239</accession>
<accession>A0A1R3XVU8</accession>
<accession>O07769</accession>
<accession>X2BFL4</accession>
<proteinExistence type="inferred from homology"/>
<gene>
    <name type="ordered locus">BQ2027_MB0625</name>
</gene>
<reference key="1">
    <citation type="journal article" date="2003" name="Proc. Natl. Acad. Sci. U.S.A.">
        <title>The complete genome sequence of Mycobacterium bovis.</title>
        <authorList>
            <person name="Garnier T."/>
            <person name="Eiglmeier K."/>
            <person name="Camus J.-C."/>
            <person name="Medina N."/>
            <person name="Mansoor H."/>
            <person name="Pryor M."/>
            <person name="Duthoy S."/>
            <person name="Grondin S."/>
            <person name="Lacroix C."/>
            <person name="Monsempe C."/>
            <person name="Simon S."/>
            <person name="Harris B."/>
            <person name="Atkin R."/>
            <person name="Doggett J."/>
            <person name="Mayes R."/>
            <person name="Keating L."/>
            <person name="Wheeler P.R."/>
            <person name="Parkhill J."/>
            <person name="Barrell B.G."/>
            <person name="Cole S.T."/>
            <person name="Gordon S.V."/>
            <person name="Hewinson R.G."/>
        </authorList>
    </citation>
    <scope>NUCLEOTIDE SEQUENCE [LARGE SCALE GENOMIC DNA]</scope>
    <source>
        <strain>ATCC BAA-935 / AF2122/97</strain>
    </source>
</reference>
<reference key="2">
    <citation type="journal article" date="2017" name="Genome Announc.">
        <title>Updated reference genome sequence and annotation of Mycobacterium bovis AF2122/97.</title>
        <authorList>
            <person name="Malone K.M."/>
            <person name="Farrell D."/>
            <person name="Stuber T.P."/>
            <person name="Schubert O.T."/>
            <person name="Aebersold R."/>
            <person name="Robbe-Austerman S."/>
            <person name="Gordon S.V."/>
        </authorList>
    </citation>
    <scope>NUCLEOTIDE SEQUENCE [LARGE SCALE GENOMIC DNA]</scope>
    <scope>GENOME REANNOTATION</scope>
    <source>
        <strain>ATCC BAA-935 / AF2122/97</strain>
    </source>
</reference>
<feature type="chain" id="PRO_0000221198" description="VapC ribonuclease Mb0625">
    <location>
        <begin position="1"/>
        <end position="133"/>
    </location>
</feature>
<feature type="domain" description="PINc" evidence="1">
    <location>
        <begin position="1"/>
        <end position="124"/>
    </location>
</feature>
<feature type="binding site" evidence="1">
    <location>
        <position position="4"/>
    </location>
    <ligand>
        <name>Mg(2+)</name>
        <dbReference type="ChEBI" id="CHEBI:18420"/>
    </ligand>
</feature>
<feature type="binding site" evidence="1">
    <location>
        <position position="100"/>
    </location>
    <ligand>
        <name>Mg(2+)</name>
        <dbReference type="ChEBI" id="CHEBI:18420"/>
    </ligand>
</feature>
<sequence length="133" mass="14533">MIVDTSAIIAILRDEDDAAAYADALANADVRRLSAASYLECGIVLDSQRDPVISRALDELIEEAEFVVEPVTERQARLARAAYADFGRGSGHPAGLNFGDCLSYALAIDRREPLLWKGNDFGHTGVQRALDRR</sequence>
<organism>
    <name type="scientific">Mycobacterium bovis (strain ATCC BAA-935 / AF2122/97)</name>
    <dbReference type="NCBI Taxonomy" id="233413"/>
    <lineage>
        <taxon>Bacteria</taxon>
        <taxon>Bacillati</taxon>
        <taxon>Actinomycetota</taxon>
        <taxon>Actinomycetes</taxon>
        <taxon>Mycobacteriales</taxon>
        <taxon>Mycobacteriaceae</taxon>
        <taxon>Mycobacterium</taxon>
        <taxon>Mycobacterium tuberculosis complex</taxon>
    </lineage>
</organism>
<evidence type="ECO:0000255" key="1">
    <source>
        <dbReference type="HAMAP-Rule" id="MF_00265"/>
    </source>
</evidence>
<name>VAPC1_MYCBO</name>
<protein>
    <recommendedName>
        <fullName>VapC ribonuclease Mb0625</fullName>
        <shortName>RNase Mb0625</shortName>
        <ecNumber evidence="1">3.1.-.-</ecNumber>
    </recommendedName>
    <alternativeName>
        <fullName>Toxin Mb0625</fullName>
    </alternativeName>
</protein>
<comment type="function">
    <text evidence="1">Toxic component of a type II toxin-antitoxin (TA) system. An RNase.</text>
</comment>
<comment type="cofactor">
    <cofactor evidence="1">
        <name>Mg(2+)</name>
        <dbReference type="ChEBI" id="CHEBI:18420"/>
    </cofactor>
</comment>
<comment type="similarity">
    <text evidence="1">Belongs to the PINc/VapC protein family.</text>
</comment>
<dbReference type="EC" id="3.1.-.-" evidence="1"/>
<dbReference type="EMBL" id="LT708304">
    <property type="protein sequence ID" value="SIT99221.1"/>
    <property type="molecule type" value="Genomic_DNA"/>
</dbReference>
<dbReference type="RefSeq" id="NP_854284.1">
    <property type="nucleotide sequence ID" value="NC_002945.3"/>
</dbReference>
<dbReference type="RefSeq" id="WP_003403187.1">
    <property type="nucleotide sequence ID" value="NC_002945.4"/>
</dbReference>
<dbReference type="SMR" id="P67239"/>
<dbReference type="KEGG" id="mbo:BQ2027_MB0625"/>
<dbReference type="PATRIC" id="fig|233413.5.peg.680"/>
<dbReference type="Proteomes" id="UP000001419">
    <property type="component" value="Chromosome"/>
</dbReference>
<dbReference type="GO" id="GO:0000287">
    <property type="term" value="F:magnesium ion binding"/>
    <property type="evidence" value="ECO:0007669"/>
    <property type="project" value="UniProtKB-UniRule"/>
</dbReference>
<dbReference type="GO" id="GO:0004540">
    <property type="term" value="F:RNA nuclease activity"/>
    <property type="evidence" value="ECO:0007669"/>
    <property type="project" value="InterPro"/>
</dbReference>
<dbReference type="CDD" id="cd09871">
    <property type="entry name" value="PIN_MtVapC28-VapC30-like"/>
    <property type="match status" value="1"/>
</dbReference>
<dbReference type="Gene3D" id="3.40.50.1010">
    <property type="entry name" value="5'-nuclease"/>
    <property type="match status" value="1"/>
</dbReference>
<dbReference type="HAMAP" id="MF_00265">
    <property type="entry name" value="VapC_Nob1"/>
    <property type="match status" value="1"/>
</dbReference>
<dbReference type="InterPro" id="IPR029060">
    <property type="entry name" value="PIN-like_dom_sf"/>
</dbReference>
<dbReference type="InterPro" id="IPR002716">
    <property type="entry name" value="PIN_dom"/>
</dbReference>
<dbReference type="InterPro" id="IPR050556">
    <property type="entry name" value="Type_II_TA_system_RNase"/>
</dbReference>
<dbReference type="InterPro" id="IPR022907">
    <property type="entry name" value="VapC_family"/>
</dbReference>
<dbReference type="PANTHER" id="PTHR33653">
    <property type="entry name" value="RIBONUCLEASE VAPC2"/>
    <property type="match status" value="1"/>
</dbReference>
<dbReference type="PANTHER" id="PTHR33653:SF1">
    <property type="entry name" value="RIBONUCLEASE VAPC2"/>
    <property type="match status" value="1"/>
</dbReference>
<dbReference type="Pfam" id="PF01850">
    <property type="entry name" value="PIN"/>
    <property type="match status" value="1"/>
</dbReference>
<dbReference type="SUPFAM" id="SSF88723">
    <property type="entry name" value="PIN domain-like"/>
    <property type="match status" value="1"/>
</dbReference>